<dbReference type="EC" id="2.7.8.2" evidence="2"/>
<dbReference type="EMBL" id="BX890572">
    <property type="protein sequence ID" value="CAI11842.1"/>
    <property type="molecule type" value="Genomic_DNA"/>
</dbReference>
<dbReference type="EMBL" id="BC045345">
    <property type="protein sequence ID" value="AAH45345.1"/>
    <property type="molecule type" value="mRNA"/>
</dbReference>
<dbReference type="RefSeq" id="NP_997789.1">
    <property type="nucleotide sequence ID" value="NM_212624.1"/>
</dbReference>
<dbReference type="SMR" id="Q7ZW02"/>
<dbReference type="FunCoup" id="Q7ZW02">
    <property type="interactions" value="752"/>
</dbReference>
<dbReference type="STRING" id="7955.ENSDARP00000003481"/>
<dbReference type="PaxDb" id="7955-ENSDARP00000003481"/>
<dbReference type="Ensembl" id="ENSDART00000016658">
    <property type="protein sequence ID" value="ENSDARP00000003481"/>
    <property type="gene ID" value="ENSDARG00000014572"/>
</dbReference>
<dbReference type="GeneID" id="322605"/>
<dbReference type="KEGG" id="dre:322605"/>
<dbReference type="AGR" id="ZFIN:ZDB-GENE-030131-1325"/>
<dbReference type="CTD" id="56994"/>
<dbReference type="ZFIN" id="ZDB-GENE-030131-1325">
    <property type="gene designation" value="chpt1"/>
</dbReference>
<dbReference type="eggNOG" id="KOG2877">
    <property type="taxonomic scope" value="Eukaryota"/>
</dbReference>
<dbReference type="HOGENOM" id="CLU_035066_1_0_1"/>
<dbReference type="InParanoid" id="Q7ZW02"/>
<dbReference type="OMA" id="FITRQIC"/>
<dbReference type="OrthoDB" id="196717at2759"/>
<dbReference type="PhylomeDB" id="Q7ZW02"/>
<dbReference type="TreeFam" id="TF313270"/>
<dbReference type="Reactome" id="R-DRE-1483191">
    <property type="pathway name" value="Synthesis of PC"/>
</dbReference>
<dbReference type="UniPathway" id="UPA00753">
    <property type="reaction ID" value="UER00740"/>
</dbReference>
<dbReference type="PRO" id="PR:Q7ZW02"/>
<dbReference type="Proteomes" id="UP000000437">
    <property type="component" value="Chromosome 4"/>
</dbReference>
<dbReference type="Bgee" id="ENSDARG00000014572">
    <property type="expression patterns" value="Expressed in liver and 32 other cell types or tissues"/>
</dbReference>
<dbReference type="GO" id="GO:0005789">
    <property type="term" value="C:endoplasmic reticulum membrane"/>
    <property type="evidence" value="ECO:0000318"/>
    <property type="project" value="GO_Central"/>
</dbReference>
<dbReference type="GO" id="GO:0005794">
    <property type="term" value="C:Golgi apparatus"/>
    <property type="evidence" value="ECO:0000318"/>
    <property type="project" value="GO_Central"/>
</dbReference>
<dbReference type="GO" id="GO:0000139">
    <property type="term" value="C:Golgi membrane"/>
    <property type="evidence" value="ECO:0007669"/>
    <property type="project" value="UniProtKB-SubCell"/>
</dbReference>
<dbReference type="GO" id="GO:0004142">
    <property type="term" value="F:diacylglycerol cholinephosphotransferase activity"/>
    <property type="evidence" value="ECO:0000318"/>
    <property type="project" value="GO_Central"/>
</dbReference>
<dbReference type="GO" id="GO:0046872">
    <property type="term" value="F:metal ion binding"/>
    <property type="evidence" value="ECO:0007669"/>
    <property type="project" value="UniProtKB-KW"/>
</dbReference>
<dbReference type="FunFam" id="1.20.120.1760:FF:000002">
    <property type="entry name" value="Choline/ethanolamine phosphotransferase 1"/>
    <property type="match status" value="1"/>
</dbReference>
<dbReference type="Gene3D" id="1.20.120.1760">
    <property type="match status" value="1"/>
</dbReference>
<dbReference type="InterPro" id="IPR000462">
    <property type="entry name" value="CDP-OH_P_trans"/>
</dbReference>
<dbReference type="InterPro" id="IPR043130">
    <property type="entry name" value="CDP-OH_PTrfase_TM_dom"/>
</dbReference>
<dbReference type="InterPro" id="IPR048254">
    <property type="entry name" value="CDP_ALCOHOL_P_TRANSF_CS"/>
</dbReference>
<dbReference type="InterPro" id="IPR014472">
    <property type="entry name" value="CHOPT"/>
</dbReference>
<dbReference type="PANTHER" id="PTHR10414:SF32">
    <property type="entry name" value="CHOLINEPHOSPHOTRANSFERASE 1"/>
    <property type="match status" value="1"/>
</dbReference>
<dbReference type="PANTHER" id="PTHR10414">
    <property type="entry name" value="ETHANOLAMINEPHOSPHOTRANSFERASE"/>
    <property type="match status" value="1"/>
</dbReference>
<dbReference type="Pfam" id="PF01066">
    <property type="entry name" value="CDP-OH_P_transf"/>
    <property type="match status" value="1"/>
</dbReference>
<dbReference type="PIRSF" id="PIRSF015665">
    <property type="entry name" value="CHOPT"/>
    <property type="match status" value="1"/>
</dbReference>
<dbReference type="PROSITE" id="PS00379">
    <property type="entry name" value="CDP_ALCOHOL_P_TRANSF"/>
    <property type="match status" value="1"/>
</dbReference>
<evidence type="ECO:0000250" key="1">
    <source>
        <dbReference type="UniProtKB" id="Q4KLV1"/>
    </source>
</evidence>
<evidence type="ECO:0000250" key="2">
    <source>
        <dbReference type="UniProtKB" id="Q8WUD6"/>
    </source>
</evidence>
<evidence type="ECO:0000305" key="3"/>
<proteinExistence type="evidence at transcript level"/>
<accession>Q7ZW02</accession>
<sequence length="382" mass="42463">MPQCECPEPLSAVQLKRLEEHKYSAAGRSLFEPPCQIYWNWLVQQIPTWVAPNTLTTIGLVINVITTVILVYYSPTATEEVPGWAFFLSALGLFIYQSLDAIDGKQARRTNSSSALGELFDHGCDAVSTVFVAVGTCICCGIGAYPNWMFFCGFVGMFMFFCAHWQTYVSGTLRFGLVDVTEVQIAIIIMYLLTAFTGVSFWEMRVPVLGVNLQTFPILGIIGGFLYSTYNYFFVIMNGGVGKNGSTVADTSVLTPGLHIGLILTLAFIIFKKSSSHLFEHHPCLYVLTFGMVIAKISNKLVVAHMTKSELHLQDTAFIGPGLLFLNQYFNSYIDEHIVLWIAMVLSLVDLVRYCTAVCLQIASHLRIRVFSISPQGHAHKD</sequence>
<reference key="1">
    <citation type="journal article" date="2013" name="Nature">
        <title>The zebrafish reference genome sequence and its relationship to the human genome.</title>
        <authorList>
            <person name="Howe K."/>
            <person name="Clark M.D."/>
            <person name="Torroja C.F."/>
            <person name="Torrance J."/>
            <person name="Berthelot C."/>
            <person name="Muffato M."/>
            <person name="Collins J.E."/>
            <person name="Humphray S."/>
            <person name="McLaren K."/>
            <person name="Matthews L."/>
            <person name="McLaren S."/>
            <person name="Sealy I."/>
            <person name="Caccamo M."/>
            <person name="Churcher C."/>
            <person name="Scott C."/>
            <person name="Barrett J.C."/>
            <person name="Koch R."/>
            <person name="Rauch G.J."/>
            <person name="White S."/>
            <person name="Chow W."/>
            <person name="Kilian B."/>
            <person name="Quintais L.T."/>
            <person name="Guerra-Assuncao J.A."/>
            <person name="Zhou Y."/>
            <person name="Gu Y."/>
            <person name="Yen J."/>
            <person name="Vogel J.H."/>
            <person name="Eyre T."/>
            <person name="Redmond S."/>
            <person name="Banerjee R."/>
            <person name="Chi J."/>
            <person name="Fu B."/>
            <person name="Langley E."/>
            <person name="Maguire S.F."/>
            <person name="Laird G.K."/>
            <person name="Lloyd D."/>
            <person name="Kenyon E."/>
            <person name="Donaldson S."/>
            <person name="Sehra H."/>
            <person name="Almeida-King J."/>
            <person name="Loveland J."/>
            <person name="Trevanion S."/>
            <person name="Jones M."/>
            <person name="Quail M."/>
            <person name="Willey D."/>
            <person name="Hunt A."/>
            <person name="Burton J."/>
            <person name="Sims S."/>
            <person name="McLay K."/>
            <person name="Plumb B."/>
            <person name="Davis J."/>
            <person name="Clee C."/>
            <person name="Oliver K."/>
            <person name="Clark R."/>
            <person name="Riddle C."/>
            <person name="Elliot D."/>
            <person name="Threadgold G."/>
            <person name="Harden G."/>
            <person name="Ware D."/>
            <person name="Begum S."/>
            <person name="Mortimore B."/>
            <person name="Kerry G."/>
            <person name="Heath P."/>
            <person name="Phillimore B."/>
            <person name="Tracey A."/>
            <person name="Corby N."/>
            <person name="Dunn M."/>
            <person name="Johnson C."/>
            <person name="Wood J."/>
            <person name="Clark S."/>
            <person name="Pelan S."/>
            <person name="Griffiths G."/>
            <person name="Smith M."/>
            <person name="Glithero R."/>
            <person name="Howden P."/>
            <person name="Barker N."/>
            <person name="Lloyd C."/>
            <person name="Stevens C."/>
            <person name="Harley J."/>
            <person name="Holt K."/>
            <person name="Panagiotidis G."/>
            <person name="Lovell J."/>
            <person name="Beasley H."/>
            <person name="Henderson C."/>
            <person name="Gordon D."/>
            <person name="Auger K."/>
            <person name="Wright D."/>
            <person name="Collins J."/>
            <person name="Raisen C."/>
            <person name="Dyer L."/>
            <person name="Leung K."/>
            <person name="Robertson L."/>
            <person name="Ambridge K."/>
            <person name="Leongamornlert D."/>
            <person name="McGuire S."/>
            <person name="Gilderthorp R."/>
            <person name="Griffiths C."/>
            <person name="Manthravadi D."/>
            <person name="Nichol S."/>
            <person name="Barker G."/>
            <person name="Whitehead S."/>
            <person name="Kay M."/>
            <person name="Brown J."/>
            <person name="Murnane C."/>
            <person name="Gray E."/>
            <person name="Humphries M."/>
            <person name="Sycamore N."/>
            <person name="Barker D."/>
            <person name="Saunders D."/>
            <person name="Wallis J."/>
            <person name="Babbage A."/>
            <person name="Hammond S."/>
            <person name="Mashreghi-Mohammadi M."/>
            <person name="Barr L."/>
            <person name="Martin S."/>
            <person name="Wray P."/>
            <person name="Ellington A."/>
            <person name="Matthews N."/>
            <person name="Ellwood M."/>
            <person name="Woodmansey R."/>
            <person name="Clark G."/>
            <person name="Cooper J."/>
            <person name="Tromans A."/>
            <person name="Grafham D."/>
            <person name="Skuce C."/>
            <person name="Pandian R."/>
            <person name="Andrews R."/>
            <person name="Harrison E."/>
            <person name="Kimberley A."/>
            <person name="Garnett J."/>
            <person name="Fosker N."/>
            <person name="Hall R."/>
            <person name="Garner P."/>
            <person name="Kelly D."/>
            <person name="Bird C."/>
            <person name="Palmer S."/>
            <person name="Gehring I."/>
            <person name="Berger A."/>
            <person name="Dooley C.M."/>
            <person name="Ersan-Urun Z."/>
            <person name="Eser C."/>
            <person name="Geiger H."/>
            <person name="Geisler M."/>
            <person name="Karotki L."/>
            <person name="Kirn A."/>
            <person name="Konantz J."/>
            <person name="Konantz M."/>
            <person name="Oberlander M."/>
            <person name="Rudolph-Geiger S."/>
            <person name="Teucke M."/>
            <person name="Lanz C."/>
            <person name="Raddatz G."/>
            <person name="Osoegawa K."/>
            <person name="Zhu B."/>
            <person name="Rapp A."/>
            <person name="Widaa S."/>
            <person name="Langford C."/>
            <person name="Yang F."/>
            <person name="Schuster S.C."/>
            <person name="Carter N.P."/>
            <person name="Harrow J."/>
            <person name="Ning Z."/>
            <person name="Herrero J."/>
            <person name="Searle S.M."/>
            <person name="Enright A."/>
            <person name="Geisler R."/>
            <person name="Plasterk R.H."/>
            <person name="Lee C."/>
            <person name="Westerfield M."/>
            <person name="de Jong P.J."/>
            <person name="Zon L.I."/>
            <person name="Postlethwait J.H."/>
            <person name="Nusslein-Volhard C."/>
            <person name="Hubbard T.J."/>
            <person name="Roest Crollius H."/>
            <person name="Rogers J."/>
            <person name="Stemple D.L."/>
        </authorList>
    </citation>
    <scope>NUCLEOTIDE SEQUENCE [LARGE SCALE GENOMIC DNA]</scope>
    <source>
        <strain>Tuebingen</strain>
    </source>
</reference>
<reference key="2">
    <citation type="submission" date="2003-01" db="EMBL/GenBank/DDBJ databases">
        <authorList>
            <consortium name="NIH - Zebrafish Gene Collection (ZGC) project"/>
        </authorList>
    </citation>
    <scope>NUCLEOTIDE SEQUENCE [LARGE SCALE MRNA]</scope>
    <source>
        <strain>AB</strain>
    </source>
</reference>
<organism>
    <name type="scientific">Danio rerio</name>
    <name type="common">Zebrafish</name>
    <name type="synonym">Brachydanio rerio</name>
    <dbReference type="NCBI Taxonomy" id="7955"/>
    <lineage>
        <taxon>Eukaryota</taxon>
        <taxon>Metazoa</taxon>
        <taxon>Chordata</taxon>
        <taxon>Craniata</taxon>
        <taxon>Vertebrata</taxon>
        <taxon>Euteleostomi</taxon>
        <taxon>Actinopterygii</taxon>
        <taxon>Neopterygii</taxon>
        <taxon>Teleostei</taxon>
        <taxon>Ostariophysi</taxon>
        <taxon>Cypriniformes</taxon>
        <taxon>Danionidae</taxon>
        <taxon>Danioninae</taxon>
        <taxon>Danio</taxon>
    </lineage>
</organism>
<protein>
    <recommendedName>
        <fullName evidence="3">Cholinephosphotransferase 1</fullName>
        <ecNumber evidence="2">2.7.8.2</ecNumber>
    </recommendedName>
    <alternativeName>
        <fullName>Diacylglycerol cholinephosphotransferase 1</fullName>
    </alternativeName>
</protein>
<name>CHPT1_DANRE</name>
<feature type="chain" id="PRO_0000289256" description="Cholinephosphotransferase 1">
    <location>
        <begin position="1"/>
        <end position="382"/>
    </location>
</feature>
<feature type="topological domain" description="Cytoplasmic" evidence="3">
    <location>
        <begin position="1"/>
        <end position="51"/>
    </location>
</feature>
<feature type="transmembrane region" description="Helical; Name=1" evidence="1">
    <location>
        <begin position="52"/>
        <end position="72"/>
    </location>
</feature>
<feature type="topological domain" description="Lumenal" evidence="3">
    <location>
        <begin position="73"/>
        <end position="82"/>
    </location>
</feature>
<feature type="transmembrane region" description="Helical; Name=2" evidence="1">
    <location>
        <begin position="83"/>
        <end position="107"/>
    </location>
</feature>
<feature type="topological domain" description="Cytoplasmic" evidence="3">
    <location>
        <begin position="108"/>
        <end position="114"/>
    </location>
</feature>
<feature type="transmembrane region" description="Helical; Name=3" evidence="1">
    <location>
        <begin position="115"/>
        <end position="139"/>
    </location>
</feature>
<feature type="topological domain" description="Lumenal" evidence="3">
    <location>
        <begin position="140"/>
        <end position="149"/>
    </location>
</feature>
<feature type="transmembrane region" description="Helical; Name=4" evidence="1">
    <location>
        <begin position="150"/>
        <end position="168"/>
    </location>
</feature>
<feature type="topological domain" description="Cytoplasmic" evidence="3">
    <location>
        <begin position="169"/>
        <end position="179"/>
    </location>
</feature>
<feature type="transmembrane region" description="Helical; Name=5" evidence="1">
    <location>
        <begin position="180"/>
        <end position="196"/>
    </location>
</feature>
<feature type="topological domain" description="Lumenal" evidence="3">
    <location>
        <begin position="197"/>
        <end position="211"/>
    </location>
</feature>
<feature type="transmembrane region" description="Helical; Name=6" evidence="1">
    <location>
        <begin position="212"/>
        <end position="237"/>
    </location>
</feature>
<feature type="topological domain" description="Cytoplasmic" evidence="3">
    <location>
        <begin position="238"/>
        <end position="254"/>
    </location>
</feature>
<feature type="transmembrane region" description="Helical; Name=7" evidence="1">
    <location>
        <begin position="255"/>
        <end position="270"/>
    </location>
</feature>
<feature type="topological domain" description="Lumenal" evidence="3">
    <location>
        <begin position="271"/>
        <end position="282"/>
    </location>
</feature>
<feature type="transmembrane region" description="Helical; Name=8" evidence="1">
    <location>
        <begin position="283"/>
        <end position="305"/>
    </location>
</feature>
<feature type="topological domain" description="Cytoplasmic" evidence="3">
    <location>
        <begin position="306"/>
        <end position="318"/>
    </location>
</feature>
<feature type="transmembrane region" description="Helical; Name=9" evidence="1">
    <location>
        <begin position="319"/>
        <end position="328"/>
    </location>
</feature>
<feature type="topological domain" description="Lumenal" evidence="3">
    <location>
        <begin position="329"/>
        <end position="335"/>
    </location>
</feature>
<feature type="transmembrane region" description="Helical; Name=10" evidence="1">
    <location>
        <begin position="336"/>
        <end position="365"/>
    </location>
</feature>
<feature type="topological domain" description="Cytoplasmic" evidence="3">
    <location>
        <begin position="366"/>
        <end position="382"/>
    </location>
</feature>
<feature type="active site" description="Proton acceptor" evidence="1">
    <location>
        <position position="122"/>
    </location>
</feature>
<feature type="binding site" evidence="1">
    <location>
        <position position="53"/>
    </location>
    <ligand>
        <name>CDP-choline</name>
        <dbReference type="ChEBI" id="CHEBI:58779"/>
    </ligand>
</feature>
<feature type="binding site" evidence="1">
    <location>
        <position position="100"/>
    </location>
    <ligand>
        <name>Mg(2+)</name>
        <dbReference type="ChEBI" id="CHEBI:18420"/>
        <label>1</label>
    </ligand>
</feature>
<feature type="binding site" evidence="1">
    <location>
        <position position="100"/>
    </location>
    <ligand>
        <name>Mg(2+)</name>
        <dbReference type="ChEBI" id="CHEBI:18420"/>
        <label>2</label>
    </ligand>
</feature>
<feature type="binding site" evidence="1">
    <location>
        <position position="103"/>
    </location>
    <ligand>
        <name>Mg(2+)</name>
        <dbReference type="ChEBI" id="CHEBI:18420"/>
        <label>1</label>
    </ligand>
</feature>
<feature type="binding site" evidence="1">
    <location>
        <position position="108"/>
    </location>
    <ligand>
        <name>CDP-choline</name>
        <dbReference type="ChEBI" id="CHEBI:58779"/>
    </ligand>
</feature>
<feature type="binding site" evidence="1">
    <location>
        <position position="121"/>
    </location>
    <ligand>
        <name>Mg(2+)</name>
        <dbReference type="ChEBI" id="CHEBI:18420"/>
        <label>1</label>
    </ligand>
</feature>
<feature type="binding site" evidence="1">
    <location>
        <position position="121"/>
    </location>
    <ligand>
        <name>Mg(2+)</name>
        <dbReference type="ChEBI" id="CHEBI:18420"/>
        <label>2</label>
    </ligand>
</feature>
<feature type="binding site" evidence="1">
    <location>
        <position position="125"/>
    </location>
    <ligand>
        <name>Mg(2+)</name>
        <dbReference type="ChEBI" id="CHEBI:18420"/>
        <label>2</label>
    </ligand>
</feature>
<feature type="site" description="Increases basicity of active site His" evidence="1">
    <location>
        <position position="118"/>
    </location>
</feature>
<comment type="function">
    <text evidence="2">Catalyzes the final step of de novo phosphatidylcholine (PC) synthesis, i.e. the transfer of choline phosphate from CDP-choline to the free hydroxyl of a diacylglycerol (DAG), producing a PC. It thereby plays a central role in the formation and maintenance of vesicular membranes.</text>
</comment>
<comment type="catalytic activity">
    <reaction evidence="2">
        <text>CDP-choline + a 1,2-diacyl-sn-glycerol = a 1,2-diacyl-sn-glycero-3-phosphocholine + CMP + H(+)</text>
        <dbReference type="Rhea" id="RHEA:32939"/>
        <dbReference type="ChEBI" id="CHEBI:15378"/>
        <dbReference type="ChEBI" id="CHEBI:17815"/>
        <dbReference type="ChEBI" id="CHEBI:57643"/>
        <dbReference type="ChEBI" id="CHEBI:58779"/>
        <dbReference type="ChEBI" id="CHEBI:60377"/>
        <dbReference type="EC" id="2.7.8.2"/>
    </reaction>
    <physiologicalReaction direction="left-to-right" evidence="2">
        <dbReference type="Rhea" id="RHEA:32940"/>
    </physiologicalReaction>
</comment>
<comment type="catalytic activity">
    <reaction evidence="2">
        <text>1-octadecanoyl-2-(5Z,8Z,11Z,14Z-eicosatetraenoyl)-sn-glycerol + CDP-choline = 1-octadecanoyl-2-(5Z,8Z,11Z,14Z-eicosatetraenoyl)-sn-glycero-3-phosphocholine + CMP + H(+)</text>
        <dbReference type="Rhea" id="RHEA:54344"/>
        <dbReference type="ChEBI" id="CHEBI:15378"/>
        <dbReference type="ChEBI" id="CHEBI:58779"/>
        <dbReference type="ChEBI" id="CHEBI:60377"/>
        <dbReference type="ChEBI" id="CHEBI:74965"/>
        <dbReference type="ChEBI" id="CHEBI:75728"/>
    </reaction>
    <physiologicalReaction direction="left-to-right" evidence="2">
        <dbReference type="Rhea" id="RHEA:54345"/>
    </physiologicalReaction>
</comment>
<comment type="catalytic activity">
    <reaction evidence="2">
        <text>1-hexadecanoyl-2-(9Z-octadecenoyl)-sn-glycerol + CDP-choline = 1-hexadecanoyl-2-(9Z-octadecenoyl)-sn-glycero-3-phosphocholine + CMP + H(+)</text>
        <dbReference type="Rhea" id="RHEA:54244"/>
        <dbReference type="ChEBI" id="CHEBI:15378"/>
        <dbReference type="ChEBI" id="CHEBI:58779"/>
        <dbReference type="ChEBI" id="CHEBI:60377"/>
        <dbReference type="ChEBI" id="CHEBI:73001"/>
        <dbReference type="ChEBI" id="CHEBI:75466"/>
    </reaction>
    <physiologicalReaction direction="left-to-right" evidence="2">
        <dbReference type="Rhea" id="RHEA:54245"/>
    </physiologicalReaction>
</comment>
<comment type="catalytic activity">
    <reaction evidence="2">
        <text>1-hexadecanoyl-2-(4Z,7Z,10Z,13Z,16Z,19Z-docosahexaenoyl)-sn-glycerol + CDP-choline = 1-hexadecanoyl-2-(4Z,7Z,10Z,13Z,16Z,19Z-docosahexaenoyl)-sn-glycero-3-phosphocholine + CMP + H(+)</text>
        <dbReference type="Rhea" id="RHEA:54332"/>
        <dbReference type="ChEBI" id="CHEBI:15378"/>
        <dbReference type="ChEBI" id="CHEBI:58779"/>
        <dbReference type="ChEBI" id="CHEBI:60377"/>
        <dbReference type="ChEBI" id="CHEBI:74963"/>
        <dbReference type="ChEBI" id="CHEBI:82949"/>
    </reaction>
    <physiologicalReaction direction="left-to-right" evidence="2">
        <dbReference type="Rhea" id="RHEA:54333"/>
    </physiologicalReaction>
</comment>
<comment type="catalytic activity">
    <reaction evidence="1">
        <text>1,2-dioctanoyl-sn-glycerol + CDP-choline = 1,2-dioctanoyl-sn-glycero-3-phosphocholine + CMP + H(+)</text>
        <dbReference type="Rhea" id="RHEA:54232"/>
        <dbReference type="ChEBI" id="CHEBI:15378"/>
        <dbReference type="ChEBI" id="CHEBI:58779"/>
        <dbReference type="ChEBI" id="CHEBI:60377"/>
        <dbReference type="ChEBI" id="CHEBI:76979"/>
        <dbReference type="ChEBI" id="CHEBI:78228"/>
    </reaction>
    <physiologicalReaction direction="left-to-right" evidence="1">
        <dbReference type="Rhea" id="RHEA:54233"/>
    </physiologicalReaction>
</comment>
<comment type="cofactor">
    <cofactor evidence="2">
        <name>Mg(2+)</name>
        <dbReference type="ChEBI" id="CHEBI:18420"/>
    </cofactor>
    <cofactor evidence="2">
        <name>Mn(2+)</name>
        <dbReference type="ChEBI" id="CHEBI:29035"/>
    </cofactor>
</comment>
<comment type="pathway">
    <text evidence="2">Phospholipid metabolism; phosphatidylcholine biosynthesis; phosphatidylcholine from phosphocholine: step 2/2.</text>
</comment>
<comment type="subcellular location">
    <subcellularLocation>
        <location evidence="2">Golgi apparatus membrane</location>
        <topology evidence="2">Multi-pass membrane protein</topology>
    </subcellularLocation>
</comment>
<comment type="similarity">
    <text evidence="3">Belongs to the CDP-alcohol phosphatidyltransferase class-I family.</text>
</comment>
<gene>
    <name type="primary">chpt1</name>
</gene>
<keyword id="KW-0333">Golgi apparatus</keyword>
<keyword id="KW-0444">Lipid biosynthesis</keyword>
<keyword id="KW-0443">Lipid metabolism</keyword>
<keyword id="KW-0460">Magnesium</keyword>
<keyword id="KW-0464">Manganese</keyword>
<keyword id="KW-0472">Membrane</keyword>
<keyword id="KW-0479">Metal-binding</keyword>
<keyword id="KW-0594">Phospholipid biosynthesis</keyword>
<keyword id="KW-1208">Phospholipid metabolism</keyword>
<keyword id="KW-1185">Reference proteome</keyword>
<keyword id="KW-0808">Transferase</keyword>
<keyword id="KW-0812">Transmembrane</keyword>
<keyword id="KW-1133">Transmembrane helix</keyword>